<sequence length="221" mass="24325">MGEKSRRKGPAPRHADGKLGRTCDHPYAPWSFTPSSRAPTAWVRPPCPVWASRLQEHSPEPRRARAPPTRRAQAALYAPALRLRDHLDRFSILMTSCTSWLQAPQAPGLCRDEQSSRISVPQLSGAPILLPDLEGTKLSNFQESSPLPHKHERKDKRSTPEEEGRSAPEKIIQSLKLCPGGHRPASLSSGCPAGCRLSFNLPPSMLLSVQKCCMPSSLKTC</sequence>
<proteinExistence type="uncertain"/>
<dbReference type="EMBL" id="AK056436">
    <property type="protein sequence ID" value="BAG51708.1"/>
    <property type="molecule type" value="mRNA"/>
</dbReference>
<dbReference type="EMBL" id="AC138710">
    <property type="status" value="NOT_ANNOTATED_CDS"/>
    <property type="molecule type" value="Genomic_DNA"/>
</dbReference>
<dbReference type="EMBL" id="BC132738">
    <property type="protein sequence ID" value="AAI32739.1"/>
    <property type="molecule type" value="mRNA"/>
</dbReference>
<dbReference type="EMBL" id="BC136630">
    <property type="protein sequence ID" value="AAI36631.1"/>
    <property type="molecule type" value="mRNA"/>
</dbReference>
<dbReference type="RefSeq" id="NP_001106905.1">
    <property type="nucleotide sequence ID" value="NM_001113434.4"/>
</dbReference>
<dbReference type="BioGRID" id="130856">
    <property type="interactions" value="168"/>
</dbReference>
<dbReference type="IntAct" id="A8MQB3">
    <property type="interactions" value="1"/>
</dbReference>
<dbReference type="iPTMnet" id="A8MQB3"/>
<dbReference type="PhosphoSitePlus" id="A8MQB3"/>
<dbReference type="BioMuta" id="C17orf51"/>
<dbReference type="MassIVE" id="A8MQB3"/>
<dbReference type="PaxDb" id="9606-ENSP00000384286"/>
<dbReference type="ProteomicsDB" id="1943"/>
<dbReference type="UCSC" id="uc002gyw.5">
    <property type="organism name" value="human"/>
</dbReference>
<dbReference type="AGR" id="HGNC:27904"/>
<dbReference type="GeneCards" id="LINC02693"/>
<dbReference type="HGNC" id="HGNC:27904">
    <property type="gene designation" value="LINC02693"/>
</dbReference>
<dbReference type="neXtProt" id="NX_A8MQB3"/>
<dbReference type="eggNOG" id="ENOG502TEG9">
    <property type="taxonomic scope" value="Eukaryota"/>
</dbReference>
<dbReference type="HOGENOM" id="CLU_108982_0_0_1"/>
<dbReference type="InParanoid" id="A8MQB3"/>
<dbReference type="PAN-GO" id="A8MQB3">
    <property type="GO annotations" value="0 GO annotations based on evolutionary models"/>
</dbReference>
<dbReference type="PhylomeDB" id="A8MQB3"/>
<dbReference type="PathwayCommons" id="A8MQB3"/>
<dbReference type="SignaLink" id="A8MQB3"/>
<dbReference type="BioGRID-ORCS" id="339263">
    <property type="hits" value="10 hits in 1115 CRISPR screens"/>
</dbReference>
<dbReference type="ChiTaRS" id="C17orf51">
    <property type="organism name" value="human"/>
</dbReference>
<dbReference type="GenomeRNAi" id="339263"/>
<dbReference type="Pharos" id="A8MQB3">
    <property type="development level" value="Tdark"/>
</dbReference>
<dbReference type="Proteomes" id="UP000005640">
    <property type="component" value="Unplaced"/>
</dbReference>
<dbReference type="RNAct" id="A8MQB3">
    <property type="molecule type" value="protein"/>
</dbReference>
<dbReference type="InterPro" id="IPR041422">
    <property type="entry name" value="DUF5545"/>
</dbReference>
<dbReference type="Pfam" id="PF17699">
    <property type="entry name" value="DUF5545"/>
    <property type="match status" value="1"/>
</dbReference>
<accession>A8MQB3</accession>
<accession>B2RN29</accession>
<accession>B5MCL4</accession>
<organism>
    <name type="scientific">Homo sapiens</name>
    <name type="common">Human</name>
    <dbReference type="NCBI Taxonomy" id="9606"/>
    <lineage>
        <taxon>Eukaryota</taxon>
        <taxon>Metazoa</taxon>
        <taxon>Chordata</taxon>
        <taxon>Craniata</taxon>
        <taxon>Vertebrata</taxon>
        <taxon>Euteleostomi</taxon>
        <taxon>Mammalia</taxon>
        <taxon>Eutheria</taxon>
        <taxon>Euarchontoglires</taxon>
        <taxon>Primates</taxon>
        <taxon>Haplorrhini</taxon>
        <taxon>Catarrhini</taxon>
        <taxon>Hominidae</taxon>
        <taxon>Homo</taxon>
    </lineage>
</organism>
<name>CQ051_HUMAN</name>
<feature type="chain" id="PRO_0000331531" description="Putative uncharacterized protein LINC02693">
    <location>
        <begin position="1"/>
        <end position="221"/>
    </location>
</feature>
<feature type="region of interest" description="Disordered" evidence="1">
    <location>
        <begin position="1"/>
        <end position="23"/>
    </location>
</feature>
<feature type="region of interest" description="Disordered" evidence="1">
    <location>
        <begin position="139"/>
        <end position="169"/>
    </location>
</feature>
<feature type="compositionally biased region" description="Basic residues" evidence="1">
    <location>
        <begin position="1"/>
        <end position="11"/>
    </location>
</feature>
<feature type="compositionally biased region" description="Basic and acidic residues" evidence="1">
    <location>
        <begin position="13"/>
        <end position="23"/>
    </location>
</feature>
<feature type="compositionally biased region" description="Basic and acidic residues" evidence="1">
    <location>
        <begin position="155"/>
        <end position="168"/>
    </location>
</feature>
<protein>
    <recommendedName>
        <fullName evidence="2">Putative uncharacterized protein LINC02693</fullName>
    </recommendedName>
</protein>
<keyword id="KW-1267">Proteomics identification</keyword>
<keyword id="KW-1185">Reference proteome</keyword>
<reference key="1">
    <citation type="journal article" date="2004" name="Nat. Genet.">
        <title>Complete sequencing and characterization of 21,243 full-length human cDNAs.</title>
        <authorList>
            <person name="Ota T."/>
            <person name="Suzuki Y."/>
            <person name="Nishikawa T."/>
            <person name="Otsuki T."/>
            <person name="Sugiyama T."/>
            <person name="Irie R."/>
            <person name="Wakamatsu A."/>
            <person name="Hayashi K."/>
            <person name="Sato H."/>
            <person name="Nagai K."/>
            <person name="Kimura K."/>
            <person name="Makita H."/>
            <person name="Sekine M."/>
            <person name="Obayashi M."/>
            <person name="Nishi T."/>
            <person name="Shibahara T."/>
            <person name="Tanaka T."/>
            <person name="Ishii S."/>
            <person name="Yamamoto J."/>
            <person name="Saito K."/>
            <person name="Kawai Y."/>
            <person name="Isono Y."/>
            <person name="Nakamura Y."/>
            <person name="Nagahari K."/>
            <person name="Murakami K."/>
            <person name="Yasuda T."/>
            <person name="Iwayanagi T."/>
            <person name="Wagatsuma M."/>
            <person name="Shiratori A."/>
            <person name="Sudo H."/>
            <person name="Hosoiri T."/>
            <person name="Kaku Y."/>
            <person name="Kodaira H."/>
            <person name="Kondo H."/>
            <person name="Sugawara M."/>
            <person name="Takahashi M."/>
            <person name="Kanda K."/>
            <person name="Yokoi T."/>
            <person name="Furuya T."/>
            <person name="Kikkawa E."/>
            <person name="Omura Y."/>
            <person name="Abe K."/>
            <person name="Kamihara K."/>
            <person name="Katsuta N."/>
            <person name="Sato K."/>
            <person name="Tanikawa M."/>
            <person name="Yamazaki M."/>
            <person name="Ninomiya K."/>
            <person name="Ishibashi T."/>
            <person name="Yamashita H."/>
            <person name="Murakawa K."/>
            <person name="Fujimori K."/>
            <person name="Tanai H."/>
            <person name="Kimata M."/>
            <person name="Watanabe M."/>
            <person name="Hiraoka S."/>
            <person name="Chiba Y."/>
            <person name="Ishida S."/>
            <person name="Ono Y."/>
            <person name="Takiguchi S."/>
            <person name="Watanabe S."/>
            <person name="Yosida M."/>
            <person name="Hotuta T."/>
            <person name="Kusano J."/>
            <person name="Kanehori K."/>
            <person name="Takahashi-Fujii A."/>
            <person name="Hara H."/>
            <person name="Tanase T.-O."/>
            <person name="Nomura Y."/>
            <person name="Togiya S."/>
            <person name="Komai F."/>
            <person name="Hara R."/>
            <person name="Takeuchi K."/>
            <person name="Arita M."/>
            <person name="Imose N."/>
            <person name="Musashino K."/>
            <person name="Yuuki H."/>
            <person name="Oshima A."/>
            <person name="Sasaki N."/>
            <person name="Aotsuka S."/>
            <person name="Yoshikawa Y."/>
            <person name="Matsunawa H."/>
            <person name="Ichihara T."/>
            <person name="Shiohata N."/>
            <person name="Sano S."/>
            <person name="Moriya S."/>
            <person name="Momiyama H."/>
            <person name="Satoh N."/>
            <person name="Takami S."/>
            <person name="Terashima Y."/>
            <person name="Suzuki O."/>
            <person name="Nakagawa S."/>
            <person name="Senoh A."/>
            <person name="Mizoguchi H."/>
            <person name="Goto Y."/>
            <person name="Shimizu F."/>
            <person name="Wakebe H."/>
            <person name="Hishigaki H."/>
            <person name="Watanabe T."/>
            <person name="Sugiyama A."/>
            <person name="Takemoto M."/>
            <person name="Kawakami B."/>
            <person name="Yamazaki M."/>
            <person name="Watanabe K."/>
            <person name="Kumagai A."/>
            <person name="Itakura S."/>
            <person name="Fukuzumi Y."/>
            <person name="Fujimori Y."/>
            <person name="Komiyama M."/>
            <person name="Tashiro H."/>
            <person name="Tanigami A."/>
            <person name="Fujiwara T."/>
            <person name="Ono T."/>
            <person name="Yamada K."/>
            <person name="Fujii Y."/>
            <person name="Ozaki K."/>
            <person name="Hirao M."/>
            <person name="Ohmori Y."/>
            <person name="Kawabata A."/>
            <person name="Hikiji T."/>
            <person name="Kobatake N."/>
            <person name="Inagaki H."/>
            <person name="Ikema Y."/>
            <person name="Okamoto S."/>
            <person name="Okitani R."/>
            <person name="Kawakami T."/>
            <person name="Noguchi S."/>
            <person name="Itoh T."/>
            <person name="Shigeta K."/>
            <person name="Senba T."/>
            <person name="Matsumura K."/>
            <person name="Nakajima Y."/>
            <person name="Mizuno T."/>
            <person name="Morinaga M."/>
            <person name="Sasaki M."/>
            <person name="Togashi T."/>
            <person name="Oyama M."/>
            <person name="Hata H."/>
            <person name="Watanabe M."/>
            <person name="Komatsu T."/>
            <person name="Mizushima-Sugano J."/>
            <person name="Satoh T."/>
            <person name="Shirai Y."/>
            <person name="Takahashi Y."/>
            <person name="Nakagawa K."/>
            <person name="Okumura K."/>
            <person name="Nagase T."/>
            <person name="Nomura N."/>
            <person name="Kikuchi H."/>
            <person name="Masuho Y."/>
            <person name="Yamashita R."/>
            <person name="Nakai K."/>
            <person name="Yada T."/>
            <person name="Nakamura Y."/>
            <person name="Ohara O."/>
            <person name="Isogai T."/>
            <person name="Sugano S."/>
        </authorList>
    </citation>
    <scope>NUCLEOTIDE SEQUENCE [LARGE SCALE MRNA]</scope>
</reference>
<reference key="2">
    <citation type="journal article" date="2006" name="Nature">
        <title>DNA sequence of human chromosome 17 and analysis of rearrangement in the human lineage.</title>
        <authorList>
            <person name="Zody M.C."/>
            <person name="Garber M."/>
            <person name="Adams D.J."/>
            <person name="Sharpe T."/>
            <person name="Harrow J."/>
            <person name="Lupski J.R."/>
            <person name="Nicholson C."/>
            <person name="Searle S.M."/>
            <person name="Wilming L."/>
            <person name="Young S.K."/>
            <person name="Abouelleil A."/>
            <person name="Allen N.R."/>
            <person name="Bi W."/>
            <person name="Bloom T."/>
            <person name="Borowsky M.L."/>
            <person name="Bugalter B.E."/>
            <person name="Butler J."/>
            <person name="Chang J.L."/>
            <person name="Chen C.-K."/>
            <person name="Cook A."/>
            <person name="Corum B."/>
            <person name="Cuomo C.A."/>
            <person name="de Jong P.J."/>
            <person name="DeCaprio D."/>
            <person name="Dewar K."/>
            <person name="FitzGerald M."/>
            <person name="Gilbert J."/>
            <person name="Gibson R."/>
            <person name="Gnerre S."/>
            <person name="Goldstein S."/>
            <person name="Grafham D.V."/>
            <person name="Grocock R."/>
            <person name="Hafez N."/>
            <person name="Hagopian D.S."/>
            <person name="Hart E."/>
            <person name="Norman C.H."/>
            <person name="Humphray S."/>
            <person name="Jaffe D.B."/>
            <person name="Jones M."/>
            <person name="Kamal M."/>
            <person name="Khodiyar V.K."/>
            <person name="LaButti K."/>
            <person name="Laird G."/>
            <person name="Lehoczky J."/>
            <person name="Liu X."/>
            <person name="Lokyitsang T."/>
            <person name="Loveland J."/>
            <person name="Lui A."/>
            <person name="Macdonald P."/>
            <person name="Major J.E."/>
            <person name="Matthews L."/>
            <person name="Mauceli E."/>
            <person name="McCarroll S.A."/>
            <person name="Mihalev A.H."/>
            <person name="Mudge J."/>
            <person name="Nguyen C."/>
            <person name="Nicol R."/>
            <person name="O'Leary S.B."/>
            <person name="Osoegawa K."/>
            <person name="Schwartz D.C."/>
            <person name="Shaw-Smith C."/>
            <person name="Stankiewicz P."/>
            <person name="Steward C."/>
            <person name="Swarbreck D."/>
            <person name="Venkataraman V."/>
            <person name="Whittaker C.A."/>
            <person name="Yang X."/>
            <person name="Zimmer A.R."/>
            <person name="Bradley A."/>
            <person name="Hubbard T."/>
            <person name="Birren B.W."/>
            <person name="Rogers J."/>
            <person name="Lander E.S."/>
            <person name="Nusbaum C."/>
        </authorList>
    </citation>
    <scope>NUCLEOTIDE SEQUENCE [LARGE SCALE GENOMIC DNA]</scope>
</reference>
<reference key="3">
    <citation type="journal article" date="2004" name="Genome Res.">
        <title>The status, quality, and expansion of the NIH full-length cDNA project: the Mammalian Gene Collection (MGC).</title>
        <authorList>
            <consortium name="The MGC Project Team"/>
        </authorList>
    </citation>
    <scope>NUCLEOTIDE SEQUENCE [LARGE SCALE MRNA]</scope>
</reference>
<comment type="caution">
    <text evidence="2">Product of a dubious gene prediction.</text>
</comment>
<evidence type="ECO:0000256" key="1">
    <source>
        <dbReference type="SAM" id="MobiDB-lite"/>
    </source>
</evidence>
<evidence type="ECO:0000305" key="2"/>
<evidence type="ECO:0000312" key="3">
    <source>
        <dbReference type="HGNC" id="HGNC:27904"/>
    </source>
</evidence>
<gene>
    <name evidence="3" type="primary">LINC02693</name>
    <name evidence="3" type="synonym">C17orf51</name>
</gene>